<keyword id="KW-0002">3D-structure</keyword>
<keyword id="KW-0963">Cytoplasm</keyword>
<keyword id="KW-0238">DNA-binding</keyword>
<keyword id="KW-0539">Nucleus</keyword>
<keyword id="KW-0597">Phosphoprotein</keyword>
<keyword id="KW-1267">Proteomics identification</keyword>
<keyword id="KW-1185">Reference proteome</keyword>
<keyword id="KW-0694">RNA-binding</keyword>
<comment type="function">
    <text evidence="1">Major constituent of messenger ribonucleoprotein particles (mRNPs). Involved in the regulation of the stability and/or translation of germ cell mRNAs. Binds to Y-box consensus promoter element. Binds to full-length mRNA with high affinity in a sequence-independent manner. Binds to short RNA sequences containing the consensus site 5'-UCCAUCA-3' with low affinity and limited sequence specificity. Its binding with maternal mRNAs is necessary for its cytoplasmic retention. May mark specific mRNAs (those transcribed from Y-box promoters) in the nucleus for cytoplasmic storage, thereby linking transcription and mRNA storage/translational delay (By similarity).</text>
</comment>
<comment type="subunit">
    <text evidence="1">Found in a mRNP complex with PABPC1 and YBX3. Found in a mRNP complex with ZAR1 and ZAR1L.</text>
</comment>
<comment type="subcellular location">
    <subcellularLocation>
        <location evidence="5">Cytoplasm</location>
    </subcellularLocation>
    <subcellularLocation>
        <location evidence="5">Nucleus</location>
    </subcellularLocation>
</comment>
<comment type="tissue specificity">
    <text evidence="3 5">Expressed in oocytes and testicular germ cells in the stage of spermatogonia to spermatocyte. Also observed placental trophoblasts, as well as in vascular smooth muscle cells in the pulmonary artery, myocardium, and skeletal muscle. Undetectable in epithelial cells in respiratory, gastrointestinal, and urogenital tracts. Up-regulated in various carcinomas and germ cell tumors (at protein level).</text>
</comment>
<comment type="PTM">
    <text evidence="1">Phosphorylated during oocyte maturation and dephosphorylated following egg activation. Phosphorylated in vitro by a kinase activity associated with testicular mRNPs. Dephosphorylation leads to a decrease in its affinity to bind RNA in vitro (By similarity).</text>
</comment>
<sequence length="364" mass="38518">MSEVEAAAGATAVPAATVPATAAGVVAVVVPVPAGEPQKGGGAGGGGGAASGPAAGTPSAPGSRTPGNPATAVSGTPAPPARSQADKPVLAIQVLGTVKWFNVRNGYGFINRNDTKEDVFVHQTAIKRNNPRKFLRSVGDGETVEFDVVEGEKGAEATNVTGPGGVPVKGSRYAPNRRKSRRFIPRPPSVAPPPMVAEIPSAGTGPGSKGERAEDSGQRPRRWCPPPFFYRRRFVRGPRPPNQQQPIEGTDRVEPKETAPLEGHQQQGDERVPPPRFRPRYRRPFRPRPRQQPTTEGGDGETKPSQGPADGSRPEPQRPRNRPYFQRRRQQAPGPQQAPGPRQPAAPETSAPVNSGDPTTTILE</sequence>
<evidence type="ECO:0000250" key="1">
    <source>
        <dbReference type="UniProtKB" id="Q9Z2C8"/>
    </source>
</evidence>
<evidence type="ECO:0000256" key="2">
    <source>
        <dbReference type="SAM" id="MobiDB-lite"/>
    </source>
</evidence>
<evidence type="ECO:0000269" key="3">
    <source>
    </source>
</evidence>
<evidence type="ECO:0000269" key="4">
    <source>
    </source>
</evidence>
<evidence type="ECO:0000269" key="5">
    <source>
    </source>
</evidence>
<evidence type="ECO:0000269" key="6">
    <source ref="2"/>
</evidence>
<evidence type="ECO:0007829" key="7">
    <source>
        <dbReference type="PDB" id="7F3J"/>
    </source>
</evidence>
<evidence type="ECO:0007829" key="8">
    <source>
        <dbReference type="PDB" id="7F3K"/>
    </source>
</evidence>
<reference key="1">
    <citation type="journal article" date="1999" name="J. Androl.">
        <title>Contrin, the human homologue of a germ-cell Y-box-binding protein: cloning, expression, and chromosomal localization.</title>
        <authorList>
            <person name="Tekur S."/>
            <person name="Pawlak A."/>
            <person name="Guellaen G."/>
            <person name="Hecht N.B."/>
        </authorList>
    </citation>
    <scope>NUCLEOTIDE SEQUENCE [MRNA]</scope>
    <scope>TISSUE SPECIFICITY</scope>
    <scope>VARIANT VAL-9</scope>
</reference>
<reference key="2">
    <citation type="submission" date="2005-09" db="EMBL/GenBank/DDBJ databases">
        <authorList>
            <person name="Mural R.J."/>
            <person name="Istrail S."/>
            <person name="Sutton G.G."/>
            <person name="Florea L."/>
            <person name="Halpern A.L."/>
            <person name="Mobarry C.M."/>
            <person name="Lippert R."/>
            <person name="Walenz B."/>
            <person name="Shatkay H."/>
            <person name="Dew I."/>
            <person name="Miller J.R."/>
            <person name="Flanigan M.J."/>
            <person name="Edwards N.J."/>
            <person name="Bolanos R."/>
            <person name="Fasulo D."/>
            <person name="Halldorsson B.V."/>
            <person name="Hannenhalli S."/>
            <person name="Turner R."/>
            <person name="Yooseph S."/>
            <person name="Lu F."/>
            <person name="Nusskern D.R."/>
            <person name="Shue B.C."/>
            <person name="Zheng X.H."/>
            <person name="Zhong F."/>
            <person name="Delcher A.L."/>
            <person name="Huson D.H."/>
            <person name="Kravitz S.A."/>
            <person name="Mouchard L."/>
            <person name="Reinert K."/>
            <person name="Remington K.A."/>
            <person name="Clark A.G."/>
            <person name="Waterman M.S."/>
            <person name="Eichler E.E."/>
            <person name="Adams M.D."/>
            <person name="Hunkapiller M.W."/>
            <person name="Myers E.W."/>
            <person name="Venter J.C."/>
        </authorList>
    </citation>
    <scope>NUCLEOTIDE SEQUENCE [LARGE SCALE GENOMIC DNA]</scope>
    <scope>VARIANT VAL-9</scope>
</reference>
<reference key="3">
    <citation type="journal article" date="2004" name="Genome Res.">
        <title>The status, quality, and expansion of the NIH full-length cDNA project: the Mammalian Gene Collection (MGC).</title>
        <authorList>
            <consortium name="The MGC Project Team"/>
        </authorList>
    </citation>
    <scope>NUCLEOTIDE SEQUENCE [LARGE SCALE MRNA]</scope>
    <scope>VARIANT VAL-9</scope>
    <source>
        <tissue>Brain</tissue>
    </source>
</reference>
<reference key="4">
    <citation type="journal article" date="2006" name="Br. J. Cancer">
        <title>Expression of Y-box-binding protein dbpC/contrin, a potentially new cancer/testis antigen.</title>
        <authorList>
            <person name="Kohno Y."/>
            <person name="Matsuki Y."/>
            <person name="Tanimoto A."/>
            <person name="Izumi H."/>
            <person name="Uchiumi T."/>
            <person name="Kohno K."/>
            <person name="Shimajiri S."/>
            <person name="Sasaguri Y."/>
        </authorList>
    </citation>
    <scope>TISSUE SPECIFICITY</scope>
    <scope>SUBCELLULAR LOCATION</scope>
</reference>
<accession>Q9Y2T7</accession>
<accession>D3DTP1</accession>
<accession>Q8N4P0</accession>
<name>YBOX2_HUMAN</name>
<proteinExistence type="evidence at protein level"/>
<organism>
    <name type="scientific">Homo sapiens</name>
    <name type="common">Human</name>
    <dbReference type="NCBI Taxonomy" id="9606"/>
    <lineage>
        <taxon>Eukaryota</taxon>
        <taxon>Metazoa</taxon>
        <taxon>Chordata</taxon>
        <taxon>Craniata</taxon>
        <taxon>Vertebrata</taxon>
        <taxon>Euteleostomi</taxon>
        <taxon>Mammalia</taxon>
        <taxon>Eutheria</taxon>
        <taxon>Euarchontoglires</taxon>
        <taxon>Primates</taxon>
        <taxon>Haplorrhini</taxon>
        <taxon>Catarrhini</taxon>
        <taxon>Hominidae</taxon>
        <taxon>Homo</taxon>
    </lineage>
</organism>
<feature type="chain" id="PRO_0000100225" description="Y-box-binding protein 2">
    <location>
        <begin position="1"/>
        <end position="364"/>
    </location>
</feature>
<feature type="domain" description="CSD">
    <location>
        <begin position="93"/>
        <end position="163"/>
    </location>
</feature>
<feature type="region of interest" description="Disordered" evidence="2">
    <location>
        <begin position="33"/>
        <end position="85"/>
    </location>
</feature>
<feature type="region of interest" description="Required for cytoplasmic retention" evidence="1">
    <location>
        <begin position="87"/>
        <end position="169"/>
    </location>
</feature>
<feature type="region of interest" description="Disordered" evidence="2">
    <location>
        <begin position="155"/>
        <end position="364"/>
    </location>
</feature>
<feature type="region of interest" description="Required for mRNA-binding" evidence="1">
    <location>
        <begin position="217"/>
        <end position="364"/>
    </location>
</feature>
<feature type="compositionally biased region" description="Gly residues" evidence="2">
    <location>
        <begin position="38"/>
        <end position="50"/>
    </location>
</feature>
<feature type="compositionally biased region" description="Low complexity" evidence="2">
    <location>
        <begin position="51"/>
        <end position="63"/>
    </location>
</feature>
<feature type="compositionally biased region" description="Polar residues" evidence="2">
    <location>
        <begin position="65"/>
        <end position="74"/>
    </location>
</feature>
<feature type="compositionally biased region" description="Basic residues" evidence="2">
    <location>
        <begin position="175"/>
        <end position="184"/>
    </location>
</feature>
<feature type="compositionally biased region" description="Pro residues" evidence="2">
    <location>
        <begin position="185"/>
        <end position="195"/>
    </location>
</feature>
<feature type="compositionally biased region" description="Basic and acidic residues" evidence="2">
    <location>
        <begin position="209"/>
        <end position="218"/>
    </location>
</feature>
<feature type="compositionally biased region" description="Basic and acidic residues" evidence="2">
    <location>
        <begin position="249"/>
        <end position="259"/>
    </location>
</feature>
<feature type="compositionally biased region" description="Basic residues" evidence="2">
    <location>
        <begin position="277"/>
        <end position="289"/>
    </location>
</feature>
<feature type="compositionally biased region" description="Basic residues" evidence="2">
    <location>
        <begin position="319"/>
        <end position="330"/>
    </location>
</feature>
<feature type="compositionally biased region" description="Polar residues" evidence="2">
    <location>
        <begin position="351"/>
        <end position="364"/>
    </location>
</feature>
<feature type="modified residue" description="Phosphothreonine" evidence="1">
    <location>
        <position position="65"/>
    </location>
</feature>
<feature type="modified residue" description="Phosphothreonine" evidence="1">
    <location>
        <position position="76"/>
    </location>
</feature>
<feature type="sequence variant" id="VAR_027916" description="In dbSNP:rs222859." evidence="3 4 6">
    <original>G</original>
    <variation>V</variation>
    <location>
        <position position="9"/>
    </location>
</feature>
<feature type="sequence variant" id="VAR_027917" description="In dbSNP:rs8069533.">
    <original>S</original>
    <variation>P</variation>
    <location>
        <position position="63"/>
    </location>
</feature>
<feature type="strand" evidence="8">
    <location>
        <begin position="90"/>
        <end position="102"/>
    </location>
</feature>
<feature type="turn" evidence="8">
    <location>
        <begin position="103"/>
        <end position="106"/>
    </location>
</feature>
<feature type="strand" evidence="8">
    <location>
        <begin position="107"/>
        <end position="112"/>
    </location>
</feature>
<feature type="turn" evidence="8">
    <location>
        <begin position="113"/>
        <end position="115"/>
    </location>
</feature>
<feature type="strand" evidence="8">
    <location>
        <begin position="118"/>
        <end position="122"/>
    </location>
</feature>
<feature type="helix" evidence="8">
    <location>
        <begin position="123"/>
        <end position="125"/>
    </location>
</feature>
<feature type="strand" evidence="8">
    <location>
        <begin position="126"/>
        <end position="128"/>
    </location>
</feature>
<feature type="strand" evidence="7">
    <location>
        <begin position="133"/>
        <end position="136"/>
    </location>
</feature>
<feature type="strand" evidence="8">
    <location>
        <begin position="143"/>
        <end position="150"/>
    </location>
</feature>
<feature type="strand" evidence="8">
    <location>
        <begin position="152"/>
        <end position="162"/>
    </location>
</feature>
<feature type="helix" evidence="8">
    <location>
        <begin position="163"/>
        <end position="165"/>
    </location>
</feature>
<protein>
    <recommendedName>
        <fullName>Y-box-binding protein 2</fullName>
    </recommendedName>
    <alternativeName>
        <fullName>Contrin</fullName>
    </alternativeName>
    <alternativeName>
        <fullName>DNA-binding protein C</fullName>
        <shortName>Dbpc</shortName>
    </alternativeName>
    <alternativeName>
        <fullName>Germ cell-specific Y-box-binding protein</fullName>
    </alternativeName>
    <alternativeName>
        <fullName>MSY2 homolog</fullName>
    </alternativeName>
</protein>
<gene>
    <name type="primary">YBX2</name>
    <name type="synonym">CSDA3</name>
    <name type="synonym">MSY2</name>
</gene>
<dbReference type="EMBL" id="AF096834">
    <property type="protein sequence ID" value="AAD30662.1"/>
    <property type="molecule type" value="mRNA"/>
</dbReference>
<dbReference type="EMBL" id="CH471108">
    <property type="protein sequence ID" value="EAW90223.1"/>
    <property type="molecule type" value="Genomic_DNA"/>
</dbReference>
<dbReference type="EMBL" id="CH471108">
    <property type="protein sequence ID" value="EAW90224.1"/>
    <property type="molecule type" value="Genomic_DNA"/>
</dbReference>
<dbReference type="EMBL" id="BC033800">
    <property type="protein sequence ID" value="AAH33800.1"/>
    <property type="molecule type" value="mRNA"/>
</dbReference>
<dbReference type="EMBL" id="BC047760">
    <property type="protein sequence ID" value="AAH47760.1"/>
    <property type="molecule type" value="mRNA"/>
</dbReference>
<dbReference type="CCDS" id="CCDS11098.1"/>
<dbReference type="RefSeq" id="NP_057066.2">
    <property type="nucleotide sequence ID" value="NM_015982.4"/>
</dbReference>
<dbReference type="PDB" id="7F3I">
    <property type="method" value="X-ray"/>
    <property type="resolution" value="2.25 A"/>
    <property type="chains" value="A/C/E=85-177"/>
</dbReference>
<dbReference type="PDB" id="7F3J">
    <property type="method" value="X-ray"/>
    <property type="resolution" value="1.95 A"/>
    <property type="chains" value="A/C/E/G=85-177"/>
</dbReference>
<dbReference type="PDB" id="7F3K">
    <property type="method" value="X-ray"/>
    <property type="resolution" value="1.76 A"/>
    <property type="chains" value="A=85-177"/>
</dbReference>
<dbReference type="PDB" id="7F3L">
    <property type="method" value="X-ray"/>
    <property type="resolution" value="1.88 A"/>
    <property type="chains" value="A=85-165"/>
</dbReference>
<dbReference type="PDBsum" id="7F3I"/>
<dbReference type="PDBsum" id="7F3J"/>
<dbReference type="PDBsum" id="7F3K"/>
<dbReference type="PDBsum" id="7F3L"/>
<dbReference type="SMR" id="Q9Y2T7"/>
<dbReference type="BioGRID" id="119277">
    <property type="interactions" value="422"/>
</dbReference>
<dbReference type="CORUM" id="Q9Y2T7"/>
<dbReference type="FunCoup" id="Q9Y2T7">
    <property type="interactions" value="1188"/>
</dbReference>
<dbReference type="IntAct" id="Q9Y2T7">
    <property type="interactions" value="214"/>
</dbReference>
<dbReference type="MINT" id="Q9Y2T7"/>
<dbReference type="STRING" id="9606.ENSP00000007699"/>
<dbReference type="GlyGen" id="Q9Y2T7">
    <property type="glycosylation" value="2 sites, 1 O-linked glycan (1 site)"/>
</dbReference>
<dbReference type="iPTMnet" id="Q9Y2T7"/>
<dbReference type="PhosphoSitePlus" id="Q9Y2T7"/>
<dbReference type="BioMuta" id="YBX2"/>
<dbReference type="DMDM" id="116242847"/>
<dbReference type="jPOST" id="Q9Y2T7"/>
<dbReference type="MassIVE" id="Q9Y2T7"/>
<dbReference type="PaxDb" id="9606-ENSP00000007699"/>
<dbReference type="PeptideAtlas" id="Q9Y2T7"/>
<dbReference type="ProteomicsDB" id="85899"/>
<dbReference type="Antibodypedia" id="3229">
    <property type="antibodies" value="330 antibodies from 37 providers"/>
</dbReference>
<dbReference type="DNASU" id="51087"/>
<dbReference type="Ensembl" id="ENST00000007699.10">
    <property type="protein sequence ID" value="ENSP00000007699.5"/>
    <property type="gene ID" value="ENSG00000006047.13"/>
</dbReference>
<dbReference type="Ensembl" id="ENST00000672150.1">
    <property type="protein sequence ID" value="ENSP00000499890.1"/>
    <property type="gene ID" value="ENSG00000288504.1"/>
</dbReference>
<dbReference type="GeneID" id="51087"/>
<dbReference type="KEGG" id="hsa:51087"/>
<dbReference type="MANE-Select" id="ENST00000007699.10">
    <property type="protein sequence ID" value="ENSP00000007699.5"/>
    <property type="RefSeq nucleotide sequence ID" value="NM_015982.4"/>
    <property type="RefSeq protein sequence ID" value="NP_057066.2"/>
</dbReference>
<dbReference type="UCSC" id="uc002gfq.3">
    <property type="organism name" value="human"/>
</dbReference>
<dbReference type="AGR" id="HGNC:17948"/>
<dbReference type="CTD" id="51087"/>
<dbReference type="DisGeNET" id="51087"/>
<dbReference type="GeneCards" id="YBX2"/>
<dbReference type="HGNC" id="HGNC:17948">
    <property type="gene designation" value="YBX2"/>
</dbReference>
<dbReference type="HPA" id="ENSG00000006047">
    <property type="expression patterns" value="Tissue enriched (testis)"/>
</dbReference>
<dbReference type="MIM" id="611447">
    <property type="type" value="gene"/>
</dbReference>
<dbReference type="neXtProt" id="NX_Q9Y2T7"/>
<dbReference type="OpenTargets" id="ENSG00000006047"/>
<dbReference type="PharmGKB" id="PA142670560"/>
<dbReference type="VEuPathDB" id="HostDB:ENSG00000006047"/>
<dbReference type="eggNOG" id="KOG3070">
    <property type="taxonomic scope" value="Eukaryota"/>
</dbReference>
<dbReference type="GeneTree" id="ENSGT00940000159816"/>
<dbReference type="HOGENOM" id="CLU_063071_0_1_1"/>
<dbReference type="InParanoid" id="Q9Y2T7"/>
<dbReference type="OMA" id="GQTQSDQ"/>
<dbReference type="OrthoDB" id="203339at2759"/>
<dbReference type="PAN-GO" id="Q9Y2T7">
    <property type="GO annotations" value="3 GO annotations based on evolutionary models"/>
</dbReference>
<dbReference type="PhylomeDB" id="Q9Y2T7"/>
<dbReference type="TreeFam" id="TF317306"/>
<dbReference type="PathwayCommons" id="Q9Y2T7"/>
<dbReference type="SignaLink" id="Q9Y2T7"/>
<dbReference type="SIGNOR" id="Q9Y2T7"/>
<dbReference type="BioGRID-ORCS" id="51087">
    <property type="hits" value="15 hits in 1170 CRISPR screens"/>
</dbReference>
<dbReference type="CD-CODE" id="51FB48F6">
    <property type="entry name" value="MARDO"/>
</dbReference>
<dbReference type="ChiTaRS" id="YBX2">
    <property type="organism name" value="human"/>
</dbReference>
<dbReference type="GeneWiki" id="YBX2"/>
<dbReference type="GenomeRNAi" id="51087"/>
<dbReference type="Pharos" id="Q9Y2T7">
    <property type="development level" value="Tbio"/>
</dbReference>
<dbReference type="PRO" id="PR:Q9Y2T7"/>
<dbReference type="Proteomes" id="UP000005640">
    <property type="component" value="Chromosome 17"/>
</dbReference>
<dbReference type="RNAct" id="Q9Y2T7">
    <property type="molecule type" value="protein"/>
</dbReference>
<dbReference type="Bgee" id="ENSG00000006047">
    <property type="expression patterns" value="Expressed in right testis and 95 other cell types or tissues"/>
</dbReference>
<dbReference type="ExpressionAtlas" id="Q9Y2T7">
    <property type="expression patterns" value="baseline and differential"/>
</dbReference>
<dbReference type="GO" id="GO:0005737">
    <property type="term" value="C:cytoplasm"/>
    <property type="evidence" value="ECO:0000304"/>
    <property type="project" value="ProtInc"/>
</dbReference>
<dbReference type="GO" id="GO:0005634">
    <property type="term" value="C:nucleus"/>
    <property type="evidence" value="ECO:0000318"/>
    <property type="project" value="GO_Central"/>
</dbReference>
<dbReference type="GO" id="GO:0003677">
    <property type="term" value="F:DNA binding"/>
    <property type="evidence" value="ECO:0007669"/>
    <property type="project" value="UniProtKB-KW"/>
</dbReference>
<dbReference type="GO" id="GO:0003676">
    <property type="term" value="F:nucleic acid binding"/>
    <property type="evidence" value="ECO:0000318"/>
    <property type="project" value="GO_Central"/>
</dbReference>
<dbReference type="GO" id="GO:0003723">
    <property type="term" value="F:RNA binding"/>
    <property type="evidence" value="ECO:0007669"/>
    <property type="project" value="UniProtKB-KW"/>
</dbReference>
<dbReference type="GO" id="GO:0048599">
    <property type="term" value="P:oocyte development"/>
    <property type="evidence" value="ECO:0007669"/>
    <property type="project" value="Ensembl"/>
</dbReference>
<dbReference type="GO" id="GO:0120162">
    <property type="term" value="P:positive regulation of cold-induced thermogenesis"/>
    <property type="evidence" value="ECO:0000250"/>
    <property type="project" value="YuBioLab"/>
</dbReference>
<dbReference type="GO" id="GO:0010468">
    <property type="term" value="P:regulation of gene expression"/>
    <property type="evidence" value="ECO:0000318"/>
    <property type="project" value="GO_Central"/>
</dbReference>
<dbReference type="GO" id="GO:0007283">
    <property type="term" value="P:spermatogenesis"/>
    <property type="evidence" value="ECO:0000304"/>
    <property type="project" value="ProtInc"/>
</dbReference>
<dbReference type="GO" id="GO:0006366">
    <property type="term" value="P:transcription by RNA polymerase II"/>
    <property type="evidence" value="ECO:0000304"/>
    <property type="project" value="ProtInc"/>
</dbReference>
<dbReference type="GO" id="GO:0009386">
    <property type="term" value="P:translational attenuation"/>
    <property type="evidence" value="ECO:0000304"/>
    <property type="project" value="ProtInc"/>
</dbReference>
<dbReference type="CDD" id="cd04458">
    <property type="entry name" value="CSP_CDS"/>
    <property type="match status" value="1"/>
</dbReference>
<dbReference type="FunFam" id="2.40.50.140:FF:000054">
    <property type="entry name" value="Nuclease-sensitive element-binding protein 1"/>
    <property type="match status" value="1"/>
</dbReference>
<dbReference type="Gene3D" id="2.40.50.140">
    <property type="entry name" value="Nucleic acid-binding proteins"/>
    <property type="match status" value="1"/>
</dbReference>
<dbReference type="InterPro" id="IPR050181">
    <property type="entry name" value="Cold_shock_domain"/>
</dbReference>
<dbReference type="InterPro" id="IPR011129">
    <property type="entry name" value="CSD"/>
</dbReference>
<dbReference type="InterPro" id="IPR019844">
    <property type="entry name" value="CSD_CS"/>
</dbReference>
<dbReference type="InterPro" id="IPR002059">
    <property type="entry name" value="CSP_DNA-bd"/>
</dbReference>
<dbReference type="InterPro" id="IPR012340">
    <property type="entry name" value="NA-bd_OB-fold"/>
</dbReference>
<dbReference type="PANTHER" id="PTHR11544">
    <property type="entry name" value="COLD SHOCK DOMAIN CONTAINING PROTEINS"/>
    <property type="match status" value="1"/>
</dbReference>
<dbReference type="Pfam" id="PF00313">
    <property type="entry name" value="CSD"/>
    <property type="match status" value="1"/>
</dbReference>
<dbReference type="PRINTS" id="PR00050">
    <property type="entry name" value="COLDSHOCK"/>
</dbReference>
<dbReference type="SMART" id="SM00357">
    <property type="entry name" value="CSP"/>
    <property type="match status" value="1"/>
</dbReference>
<dbReference type="SUPFAM" id="SSF50249">
    <property type="entry name" value="Nucleic acid-binding proteins"/>
    <property type="match status" value="1"/>
</dbReference>
<dbReference type="PROSITE" id="PS00352">
    <property type="entry name" value="CSD_1"/>
    <property type="match status" value="1"/>
</dbReference>
<dbReference type="PROSITE" id="PS51857">
    <property type="entry name" value="CSD_2"/>
    <property type="match status" value="1"/>
</dbReference>